<sequence length="132" mass="13332">MSKKTDEILDSLKSLSLLEASELVKQIEEAFGVSAAASAGVVMAAPGAGGGASAAGEAAEEKTEFDVILESFDAAAKIKVLKEVRNATGLGLGEAKAMVEAAPKTIKEGASKEDAEALKKAIEAVGGKVTLK</sequence>
<gene>
    <name evidence="1" type="primary">rplL</name>
    <name evidence="1" type="synonym">rpl12</name>
    <name type="ordered locus">P9211_02191</name>
</gene>
<accession>A9BDG4</accession>
<comment type="function">
    <text evidence="1">Forms part of the ribosomal stalk which helps the ribosome interact with GTP-bound translation factors. Is thus essential for accurate translation.</text>
</comment>
<comment type="subunit">
    <text evidence="1">Homodimer. Part of the ribosomal stalk of the 50S ribosomal subunit. Forms a multimeric L10(L12)X complex, where L10 forms an elongated spine to which 2 to 4 L12 dimers bind in a sequential fashion. Binds GTP-bound translation factors.</text>
</comment>
<comment type="similarity">
    <text evidence="1">Belongs to the bacterial ribosomal protein bL12 family.</text>
</comment>
<keyword id="KW-1185">Reference proteome</keyword>
<keyword id="KW-0687">Ribonucleoprotein</keyword>
<keyword id="KW-0689">Ribosomal protein</keyword>
<reference key="1">
    <citation type="journal article" date="2007" name="PLoS Genet.">
        <title>Patterns and implications of gene gain and loss in the evolution of Prochlorococcus.</title>
        <authorList>
            <person name="Kettler G.C."/>
            <person name="Martiny A.C."/>
            <person name="Huang K."/>
            <person name="Zucker J."/>
            <person name="Coleman M.L."/>
            <person name="Rodrigue S."/>
            <person name="Chen F."/>
            <person name="Lapidus A."/>
            <person name="Ferriera S."/>
            <person name="Johnson J."/>
            <person name="Steglich C."/>
            <person name="Church G.M."/>
            <person name="Richardson P."/>
            <person name="Chisholm S.W."/>
        </authorList>
    </citation>
    <scope>NUCLEOTIDE SEQUENCE [LARGE SCALE GENOMIC DNA]</scope>
    <source>
        <strain>MIT 9211</strain>
    </source>
</reference>
<dbReference type="EMBL" id="CP000878">
    <property type="protein sequence ID" value="ABX08150.1"/>
    <property type="molecule type" value="Genomic_DNA"/>
</dbReference>
<dbReference type="RefSeq" id="WP_012194775.1">
    <property type="nucleotide sequence ID" value="NC_009976.1"/>
</dbReference>
<dbReference type="SMR" id="A9BDG4"/>
<dbReference type="STRING" id="93059.P9211_02191"/>
<dbReference type="KEGG" id="pmj:P9211_02191"/>
<dbReference type="eggNOG" id="COG0222">
    <property type="taxonomic scope" value="Bacteria"/>
</dbReference>
<dbReference type="HOGENOM" id="CLU_086499_3_0_3"/>
<dbReference type="OrthoDB" id="9811748at2"/>
<dbReference type="Proteomes" id="UP000000788">
    <property type="component" value="Chromosome"/>
</dbReference>
<dbReference type="GO" id="GO:0005737">
    <property type="term" value="C:cytoplasm"/>
    <property type="evidence" value="ECO:0007669"/>
    <property type="project" value="UniProtKB-ARBA"/>
</dbReference>
<dbReference type="GO" id="GO:1990904">
    <property type="term" value="C:ribonucleoprotein complex"/>
    <property type="evidence" value="ECO:0007669"/>
    <property type="project" value="UniProtKB-KW"/>
</dbReference>
<dbReference type="GO" id="GO:0005840">
    <property type="term" value="C:ribosome"/>
    <property type="evidence" value="ECO:0007669"/>
    <property type="project" value="UniProtKB-KW"/>
</dbReference>
<dbReference type="GO" id="GO:0003729">
    <property type="term" value="F:mRNA binding"/>
    <property type="evidence" value="ECO:0007669"/>
    <property type="project" value="TreeGrafter"/>
</dbReference>
<dbReference type="GO" id="GO:0003735">
    <property type="term" value="F:structural constituent of ribosome"/>
    <property type="evidence" value="ECO:0007669"/>
    <property type="project" value="InterPro"/>
</dbReference>
<dbReference type="GO" id="GO:0006412">
    <property type="term" value="P:translation"/>
    <property type="evidence" value="ECO:0007669"/>
    <property type="project" value="UniProtKB-UniRule"/>
</dbReference>
<dbReference type="CDD" id="cd00387">
    <property type="entry name" value="Ribosomal_L7_L12"/>
    <property type="match status" value="1"/>
</dbReference>
<dbReference type="FunFam" id="3.30.1390.10:FF:000001">
    <property type="entry name" value="50S ribosomal protein L7/L12"/>
    <property type="match status" value="1"/>
</dbReference>
<dbReference type="Gene3D" id="3.30.1390.10">
    <property type="match status" value="1"/>
</dbReference>
<dbReference type="Gene3D" id="1.20.5.710">
    <property type="entry name" value="Single helix bin"/>
    <property type="match status" value="1"/>
</dbReference>
<dbReference type="HAMAP" id="MF_00368">
    <property type="entry name" value="Ribosomal_bL12"/>
    <property type="match status" value="1"/>
</dbReference>
<dbReference type="InterPro" id="IPR000206">
    <property type="entry name" value="Ribosomal_bL12"/>
</dbReference>
<dbReference type="InterPro" id="IPR013823">
    <property type="entry name" value="Ribosomal_bL12_C"/>
</dbReference>
<dbReference type="InterPro" id="IPR014719">
    <property type="entry name" value="Ribosomal_bL12_C/ClpS-like"/>
</dbReference>
<dbReference type="InterPro" id="IPR008932">
    <property type="entry name" value="Ribosomal_bL12_oligo"/>
</dbReference>
<dbReference type="InterPro" id="IPR036235">
    <property type="entry name" value="Ribosomal_bL12_oligo_N_sf"/>
</dbReference>
<dbReference type="NCBIfam" id="TIGR00855">
    <property type="entry name" value="L12"/>
    <property type="match status" value="1"/>
</dbReference>
<dbReference type="PANTHER" id="PTHR45987">
    <property type="entry name" value="39S RIBOSOMAL PROTEIN L12"/>
    <property type="match status" value="1"/>
</dbReference>
<dbReference type="PANTHER" id="PTHR45987:SF4">
    <property type="entry name" value="LARGE RIBOSOMAL SUBUNIT PROTEIN BL12M"/>
    <property type="match status" value="1"/>
</dbReference>
<dbReference type="Pfam" id="PF00542">
    <property type="entry name" value="Ribosomal_L12"/>
    <property type="match status" value="1"/>
</dbReference>
<dbReference type="Pfam" id="PF16320">
    <property type="entry name" value="Ribosomal_L12_N"/>
    <property type="match status" value="1"/>
</dbReference>
<dbReference type="SUPFAM" id="SSF54736">
    <property type="entry name" value="ClpS-like"/>
    <property type="match status" value="1"/>
</dbReference>
<dbReference type="SUPFAM" id="SSF48300">
    <property type="entry name" value="Ribosomal protein L7/12, oligomerisation (N-terminal) domain"/>
    <property type="match status" value="1"/>
</dbReference>
<evidence type="ECO:0000255" key="1">
    <source>
        <dbReference type="HAMAP-Rule" id="MF_00368"/>
    </source>
</evidence>
<evidence type="ECO:0000305" key="2"/>
<organism>
    <name type="scientific">Prochlorococcus marinus (strain MIT 9211)</name>
    <dbReference type="NCBI Taxonomy" id="93059"/>
    <lineage>
        <taxon>Bacteria</taxon>
        <taxon>Bacillati</taxon>
        <taxon>Cyanobacteriota</taxon>
        <taxon>Cyanophyceae</taxon>
        <taxon>Synechococcales</taxon>
        <taxon>Prochlorococcaceae</taxon>
        <taxon>Prochlorococcus</taxon>
    </lineage>
</organism>
<proteinExistence type="inferred from homology"/>
<feature type="chain" id="PRO_1000121472" description="Large ribosomal subunit protein bL12">
    <location>
        <begin position="1"/>
        <end position="132"/>
    </location>
</feature>
<protein>
    <recommendedName>
        <fullName evidence="1">Large ribosomal subunit protein bL12</fullName>
    </recommendedName>
    <alternativeName>
        <fullName evidence="2">50S ribosomal protein L7/L12</fullName>
    </alternativeName>
</protein>
<name>RL7_PROM4</name>